<dbReference type="EMBL" id="CP000563">
    <property type="protein sequence ID" value="ABN60731.1"/>
    <property type="molecule type" value="Genomic_DNA"/>
</dbReference>
<dbReference type="RefSeq" id="WP_006080791.1">
    <property type="nucleotide sequence ID" value="NC_009052.1"/>
</dbReference>
<dbReference type="SMR" id="A3D1W8"/>
<dbReference type="STRING" id="325240.Sbal_1213"/>
<dbReference type="GeneID" id="94728937"/>
<dbReference type="KEGG" id="sbl:Sbal_1213"/>
<dbReference type="HOGENOM" id="CLU_103507_2_2_6"/>
<dbReference type="OrthoDB" id="9803541at2"/>
<dbReference type="Proteomes" id="UP000001557">
    <property type="component" value="Chromosome"/>
</dbReference>
<dbReference type="GO" id="GO:0022625">
    <property type="term" value="C:cytosolic large ribosomal subunit"/>
    <property type="evidence" value="ECO:0007669"/>
    <property type="project" value="TreeGrafter"/>
</dbReference>
<dbReference type="GO" id="GO:0003735">
    <property type="term" value="F:structural constituent of ribosome"/>
    <property type="evidence" value="ECO:0007669"/>
    <property type="project" value="InterPro"/>
</dbReference>
<dbReference type="GO" id="GO:0006412">
    <property type="term" value="P:translation"/>
    <property type="evidence" value="ECO:0007669"/>
    <property type="project" value="UniProtKB-UniRule"/>
</dbReference>
<dbReference type="FunFam" id="2.30.30.790:FF:000001">
    <property type="entry name" value="50S ribosomal protein L19"/>
    <property type="match status" value="1"/>
</dbReference>
<dbReference type="Gene3D" id="2.30.30.790">
    <property type="match status" value="1"/>
</dbReference>
<dbReference type="HAMAP" id="MF_00402">
    <property type="entry name" value="Ribosomal_bL19"/>
    <property type="match status" value="1"/>
</dbReference>
<dbReference type="InterPro" id="IPR001857">
    <property type="entry name" value="Ribosomal_bL19"/>
</dbReference>
<dbReference type="InterPro" id="IPR018257">
    <property type="entry name" value="Ribosomal_bL19_CS"/>
</dbReference>
<dbReference type="InterPro" id="IPR038657">
    <property type="entry name" value="Ribosomal_bL19_sf"/>
</dbReference>
<dbReference type="InterPro" id="IPR008991">
    <property type="entry name" value="Translation_prot_SH3-like_sf"/>
</dbReference>
<dbReference type="NCBIfam" id="TIGR01024">
    <property type="entry name" value="rplS_bact"/>
    <property type="match status" value="1"/>
</dbReference>
<dbReference type="PANTHER" id="PTHR15680:SF9">
    <property type="entry name" value="LARGE RIBOSOMAL SUBUNIT PROTEIN BL19M"/>
    <property type="match status" value="1"/>
</dbReference>
<dbReference type="PANTHER" id="PTHR15680">
    <property type="entry name" value="RIBOSOMAL PROTEIN L19"/>
    <property type="match status" value="1"/>
</dbReference>
<dbReference type="Pfam" id="PF01245">
    <property type="entry name" value="Ribosomal_L19"/>
    <property type="match status" value="1"/>
</dbReference>
<dbReference type="PIRSF" id="PIRSF002191">
    <property type="entry name" value="Ribosomal_L19"/>
    <property type="match status" value="1"/>
</dbReference>
<dbReference type="PRINTS" id="PR00061">
    <property type="entry name" value="RIBOSOMALL19"/>
</dbReference>
<dbReference type="SUPFAM" id="SSF50104">
    <property type="entry name" value="Translation proteins SH3-like domain"/>
    <property type="match status" value="1"/>
</dbReference>
<dbReference type="PROSITE" id="PS01015">
    <property type="entry name" value="RIBOSOMAL_L19"/>
    <property type="match status" value="1"/>
</dbReference>
<protein>
    <recommendedName>
        <fullName evidence="1">Large ribosomal subunit protein bL19</fullName>
    </recommendedName>
    <alternativeName>
        <fullName evidence="2">50S ribosomal protein L19</fullName>
    </alternativeName>
</protein>
<organism>
    <name type="scientific">Shewanella baltica (strain OS155 / ATCC BAA-1091)</name>
    <dbReference type="NCBI Taxonomy" id="325240"/>
    <lineage>
        <taxon>Bacteria</taxon>
        <taxon>Pseudomonadati</taxon>
        <taxon>Pseudomonadota</taxon>
        <taxon>Gammaproteobacteria</taxon>
        <taxon>Alteromonadales</taxon>
        <taxon>Shewanellaceae</taxon>
        <taxon>Shewanella</taxon>
    </lineage>
</organism>
<comment type="function">
    <text evidence="1">This protein is located at the 30S-50S ribosomal subunit interface and may play a role in the structure and function of the aminoacyl-tRNA binding site.</text>
</comment>
<comment type="similarity">
    <text evidence="1">Belongs to the bacterial ribosomal protein bL19 family.</text>
</comment>
<accession>A3D1W8</accession>
<reference key="1">
    <citation type="submission" date="2007-02" db="EMBL/GenBank/DDBJ databases">
        <title>Complete sequence of chromosome of Shewanella baltica OS155.</title>
        <authorList>
            <consortium name="US DOE Joint Genome Institute"/>
            <person name="Copeland A."/>
            <person name="Lucas S."/>
            <person name="Lapidus A."/>
            <person name="Barry K."/>
            <person name="Detter J.C."/>
            <person name="Glavina del Rio T."/>
            <person name="Hammon N."/>
            <person name="Israni S."/>
            <person name="Dalin E."/>
            <person name="Tice H."/>
            <person name="Pitluck S."/>
            <person name="Sims D.R."/>
            <person name="Brettin T."/>
            <person name="Bruce D."/>
            <person name="Han C."/>
            <person name="Tapia R."/>
            <person name="Brainard J."/>
            <person name="Schmutz J."/>
            <person name="Larimer F."/>
            <person name="Land M."/>
            <person name="Hauser L."/>
            <person name="Kyrpides N."/>
            <person name="Mikhailova N."/>
            <person name="Brettar I."/>
            <person name="Klappenbach J."/>
            <person name="Konstantinidis K."/>
            <person name="Rodrigues J."/>
            <person name="Tiedje J."/>
            <person name="Richardson P."/>
        </authorList>
    </citation>
    <scope>NUCLEOTIDE SEQUENCE [LARGE SCALE GENOMIC DNA]</scope>
    <source>
        <strain>OS155 / ATCC BAA-1091</strain>
    </source>
</reference>
<proteinExistence type="inferred from homology"/>
<keyword id="KW-1185">Reference proteome</keyword>
<keyword id="KW-0687">Ribonucleoprotein</keyword>
<keyword id="KW-0689">Ribosomal protein</keyword>
<sequence>MNNIIKMLNDEQMKQDVPAFGAGDTVVVQVRVKEGDKERLQAFEGVVIAKRNRGLHSAFTVRKISNGEGVERAFQTHSPLIASIEVKRRGRVRRAKLYYLRDRSGKSARIREKLATK</sequence>
<feature type="chain" id="PRO_1000049738" description="Large ribosomal subunit protein bL19">
    <location>
        <begin position="1"/>
        <end position="117"/>
    </location>
</feature>
<gene>
    <name evidence="1" type="primary">rplS</name>
    <name type="ordered locus">Sbal_1213</name>
</gene>
<evidence type="ECO:0000255" key="1">
    <source>
        <dbReference type="HAMAP-Rule" id="MF_00402"/>
    </source>
</evidence>
<evidence type="ECO:0000305" key="2"/>
<name>RL19_SHEB5</name>